<dbReference type="EMBL" id="AE000657">
    <property type="protein sequence ID" value="AAC07249.1"/>
    <property type="molecule type" value="Genomic_DNA"/>
</dbReference>
<dbReference type="PIR" id="A70407">
    <property type="entry name" value="A70407"/>
</dbReference>
<dbReference type="RefSeq" id="NP_213848.1">
    <property type="nucleotide sequence ID" value="NC_000918.1"/>
</dbReference>
<dbReference type="RefSeq" id="WP_010880786.1">
    <property type="nucleotide sequence ID" value="NC_000918.1"/>
</dbReference>
<dbReference type="SMR" id="O67284"/>
<dbReference type="STRING" id="224324.aq_1239"/>
<dbReference type="EnsemblBacteria" id="AAC07249">
    <property type="protein sequence ID" value="AAC07249"/>
    <property type="gene ID" value="aq_1239"/>
</dbReference>
<dbReference type="KEGG" id="aae:aq_1239"/>
<dbReference type="PATRIC" id="fig|224324.8.peg.965"/>
<dbReference type="eggNOG" id="COG1868">
    <property type="taxonomic scope" value="Bacteria"/>
</dbReference>
<dbReference type="HOGENOM" id="CLU_2153068_0_0_0"/>
<dbReference type="InParanoid" id="O67284"/>
<dbReference type="OrthoDB" id="9806941at2"/>
<dbReference type="Proteomes" id="UP000000798">
    <property type="component" value="Chromosome"/>
</dbReference>
<sequence length="111" mass="13020">MSEELLSQEEIEFLMETLEKKKVEKIPQGLQPFDFDSLEKISSERYPRLEQFLSTFTERLSEELKKITLSNLKVKVKEKDVKPLSKILPNLSPPVVFIRQHLEEVGDFTHC</sequence>
<protein>
    <recommendedName>
        <fullName>Uncharacterized protein aq_1239</fullName>
    </recommendedName>
</protein>
<organism>
    <name type="scientific">Aquifex aeolicus (strain VF5)</name>
    <dbReference type="NCBI Taxonomy" id="224324"/>
    <lineage>
        <taxon>Bacteria</taxon>
        <taxon>Pseudomonadati</taxon>
        <taxon>Aquificota</taxon>
        <taxon>Aquificia</taxon>
        <taxon>Aquificales</taxon>
        <taxon>Aquificaceae</taxon>
        <taxon>Aquifex</taxon>
    </lineage>
</organism>
<name>Y1239_AQUAE</name>
<keyword id="KW-1185">Reference proteome</keyword>
<gene>
    <name type="ordered locus">aq_1239</name>
</gene>
<proteinExistence type="predicted"/>
<feature type="chain" id="PRO_0000186912" description="Uncharacterized protein aq_1239">
    <location>
        <begin position="1"/>
        <end position="111"/>
    </location>
</feature>
<accession>O67284</accession>
<reference key="1">
    <citation type="journal article" date="1998" name="Nature">
        <title>The complete genome of the hyperthermophilic bacterium Aquifex aeolicus.</title>
        <authorList>
            <person name="Deckert G."/>
            <person name="Warren P.V."/>
            <person name="Gaasterland T."/>
            <person name="Young W.G."/>
            <person name="Lenox A.L."/>
            <person name="Graham D.E."/>
            <person name="Overbeek R."/>
            <person name="Snead M.A."/>
            <person name="Keller M."/>
            <person name="Aujay M."/>
            <person name="Huber R."/>
            <person name="Feldman R.A."/>
            <person name="Short J.M."/>
            <person name="Olsen G.J."/>
            <person name="Swanson R.V."/>
        </authorList>
    </citation>
    <scope>NUCLEOTIDE SEQUENCE [LARGE SCALE GENOMIC DNA]</scope>
    <source>
        <strain>VF5</strain>
    </source>
</reference>